<dbReference type="EMBL" id="AF148701">
    <property type="protein sequence ID" value="AAD39829.1"/>
    <property type="molecule type" value="mRNA"/>
</dbReference>
<dbReference type="CCDS" id="CCDS27887.1"/>
<dbReference type="RefSeq" id="NP_061257.1">
    <property type="nucleotide sequence ID" value="NM_018787.1"/>
</dbReference>
<dbReference type="FunCoup" id="Q9WVA8">
    <property type="interactions" value="388"/>
</dbReference>
<dbReference type="STRING" id="10090.ENSMUSP00000023814"/>
<dbReference type="PaxDb" id="10090-ENSMUSP00000023814"/>
<dbReference type="ProteomicsDB" id="293950"/>
<dbReference type="Antibodypedia" id="15271">
    <property type="antibodies" value="135 antibodies from 23 providers"/>
</dbReference>
<dbReference type="DNASU" id="54615"/>
<dbReference type="Ensembl" id="ENSMUST00000023814.9">
    <property type="protein sequence ID" value="ENSMUSP00000023814.7"/>
    <property type="gene ID" value="ENSMUSG00000023052.9"/>
</dbReference>
<dbReference type="GeneID" id="54615"/>
<dbReference type="KEGG" id="mmu:54615"/>
<dbReference type="UCSC" id="uc007xwj.1">
    <property type="organism name" value="mouse"/>
</dbReference>
<dbReference type="AGR" id="MGI:1891708"/>
<dbReference type="CTD" id="8620"/>
<dbReference type="MGI" id="MGI:1891708">
    <property type="gene designation" value="Npff"/>
</dbReference>
<dbReference type="VEuPathDB" id="HostDB:ENSMUSG00000023052"/>
<dbReference type="eggNOG" id="ENOG502S60B">
    <property type="taxonomic scope" value="Eukaryota"/>
</dbReference>
<dbReference type="GeneTree" id="ENSGT00390000015021"/>
<dbReference type="HOGENOM" id="CLU_169782_0_0_1"/>
<dbReference type="InParanoid" id="Q9WVA8"/>
<dbReference type="OMA" id="EGLHSQF"/>
<dbReference type="OrthoDB" id="8878267at2759"/>
<dbReference type="PhylomeDB" id="Q9WVA8"/>
<dbReference type="TreeFam" id="TF330924"/>
<dbReference type="Reactome" id="R-MMU-389397">
    <property type="pathway name" value="Orexin and neuropeptides FF and QRFP bind to their respective receptors"/>
</dbReference>
<dbReference type="Reactome" id="R-MMU-416476">
    <property type="pathway name" value="G alpha (q) signalling events"/>
</dbReference>
<dbReference type="BioGRID-ORCS" id="54615">
    <property type="hits" value="1 hit in 78 CRISPR screens"/>
</dbReference>
<dbReference type="ChiTaRS" id="Npff">
    <property type="organism name" value="mouse"/>
</dbReference>
<dbReference type="PRO" id="PR:Q9WVA8"/>
<dbReference type="Proteomes" id="UP000000589">
    <property type="component" value="Chromosome 15"/>
</dbReference>
<dbReference type="RNAct" id="Q9WVA8">
    <property type="molecule type" value="protein"/>
</dbReference>
<dbReference type="Bgee" id="ENSMUSG00000023052">
    <property type="expression patterns" value="Expressed in bone marrow and 65 other cell types or tissues"/>
</dbReference>
<dbReference type="GO" id="GO:0043679">
    <property type="term" value="C:axon terminus"/>
    <property type="evidence" value="ECO:0007669"/>
    <property type="project" value="Ensembl"/>
</dbReference>
<dbReference type="GO" id="GO:0030425">
    <property type="term" value="C:dendrite"/>
    <property type="evidence" value="ECO:0007669"/>
    <property type="project" value="Ensembl"/>
</dbReference>
<dbReference type="GO" id="GO:0005615">
    <property type="term" value="C:extracellular space"/>
    <property type="evidence" value="ECO:0007669"/>
    <property type="project" value="Ensembl"/>
</dbReference>
<dbReference type="GO" id="GO:0098992">
    <property type="term" value="C:neuronal dense core vesicle"/>
    <property type="evidence" value="ECO:0007669"/>
    <property type="project" value="Ensembl"/>
</dbReference>
<dbReference type="GO" id="GO:0043204">
    <property type="term" value="C:perikaryon"/>
    <property type="evidence" value="ECO:0007669"/>
    <property type="project" value="Ensembl"/>
</dbReference>
<dbReference type="GO" id="GO:0098794">
    <property type="term" value="C:postsynapse"/>
    <property type="evidence" value="ECO:0007669"/>
    <property type="project" value="GOC"/>
</dbReference>
<dbReference type="GO" id="GO:0001664">
    <property type="term" value="F:G protein-coupled receptor binding"/>
    <property type="evidence" value="ECO:0007669"/>
    <property type="project" value="Ensembl"/>
</dbReference>
<dbReference type="GO" id="GO:0005184">
    <property type="term" value="F:neuropeptide hormone activity"/>
    <property type="evidence" value="ECO:0007669"/>
    <property type="project" value="Ensembl"/>
</dbReference>
<dbReference type="GO" id="GO:0002438">
    <property type="term" value="P:acute inflammatory response to antigenic stimulus"/>
    <property type="evidence" value="ECO:0007669"/>
    <property type="project" value="Ensembl"/>
</dbReference>
<dbReference type="GO" id="GO:0060079">
    <property type="term" value="P:excitatory postsynaptic potential"/>
    <property type="evidence" value="ECO:0007669"/>
    <property type="project" value="Ensembl"/>
</dbReference>
<dbReference type="GO" id="GO:0060135">
    <property type="term" value="P:maternal process involved in female pregnancy"/>
    <property type="evidence" value="ECO:0007669"/>
    <property type="project" value="Ensembl"/>
</dbReference>
<dbReference type="GO" id="GO:0032099">
    <property type="term" value="P:negative regulation of appetite"/>
    <property type="evidence" value="ECO:0007669"/>
    <property type="project" value="Ensembl"/>
</dbReference>
<dbReference type="GO" id="GO:0010459">
    <property type="term" value="P:negative regulation of heart rate"/>
    <property type="evidence" value="ECO:0007669"/>
    <property type="project" value="Ensembl"/>
</dbReference>
<dbReference type="GO" id="GO:0046676">
    <property type="term" value="P:negative regulation of insulin secretion"/>
    <property type="evidence" value="ECO:0007669"/>
    <property type="project" value="Ensembl"/>
</dbReference>
<dbReference type="GO" id="GO:0007218">
    <property type="term" value="P:neuropeptide signaling pathway"/>
    <property type="evidence" value="ECO:0007669"/>
    <property type="project" value="UniProtKB-KW"/>
</dbReference>
<dbReference type="GO" id="GO:0045777">
    <property type="term" value="P:positive regulation of blood pressure"/>
    <property type="evidence" value="ECO:0007669"/>
    <property type="project" value="Ensembl"/>
</dbReference>
<dbReference type="GO" id="GO:0007204">
    <property type="term" value="P:positive regulation of cytosolic calcium ion concentration"/>
    <property type="evidence" value="ECO:0007669"/>
    <property type="project" value="Ensembl"/>
</dbReference>
<dbReference type="GO" id="GO:0003254">
    <property type="term" value="P:regulation of membrane depolarization"/>
    <property type="evidence" value="ECO:0007669"/>
    <property type="project" value="Ensembl"/>
</dbReference>
<dbReference type="GO" id="GO:0009410">
    <property type="term" value="P:response to xenobiotic stimulus"/>
    <property type="evidence" value="ECO:0007669"/>
    <property type="project" value="Ensembl"/>
</dbReference>
<dbReference type="GO" id="GO:0070253">
    <property type="term" value="P:somatostatin secretion"/>
    <property type="evidence" value="ECO:0007669"/>
    <property type="project" value="Ensembl"/>
</dbReference>
<dbReference type="GO" id="GO:0021510">
    <property type="term" value="P:spinal cord development"/>
    <property type="evidence" value="ECO:0007669"/>
    <property type="project" value="Ensembl"/>
</dbReference>
<dbReference type="GO" id="GO:0030103">
    <property type="term" value="P:vasopressin secretion"/>
    <property type="evidence" value="ECO:0007669"/>
    <property type="project" value="Ensembl"/>
</dbReference>
<dbReference type="InterPro" id="IPR008065">
    <property type="entry name" value="NPFF"/>
</dbReference>
<dbReference type="PANTHER" id="PTHR15044">
    <property type="entry name" value="NEUROPEPTIDE FF"/>
    <property type="match status" value="1"/>
</dbReference>
<dbReference type="PANTHER" id="PTHR15044:SF0">
    <property type="entry name" value="PRO-FMRFAMIDE-RELATED NEUROPEPTIDE FF"/>
    <property type="match status" value="1"/>
</dbReference>
<dbReference type="Pfam" id="PF15085">
    <property type="entry name" value="NPFF"/>
    <property type="match status" value="1"/>
</dbReference>
<dbReference type="PIRSF" id="PIRSF038092">
    <property type="entry name" value="FMRFamid-rel_pep_precur"/>
    <property type="match status" value="1"/>
</dbReference>
<dbReference type="PRINTS" id="PR01682">
    <property type="entry name" value="FMRFAMIDEPEP"/>
</dbReference>
<feature type="signal peptide" evidence="2">
    <location>
        <begin position="1"/>
        <end position="21"/>
    </location>
</feature>
<feature type="propeptide" id="PRO_0000009903">
    <location>
        <begin position="22"/>
        <end position="69"/>
    </location>
</feature>
<feature type="peptide" id="PRO_0000009904" description="Neuropeptide SF">
    <location>
        <begin position="72"/>
        <end position="82"/>
    </location>
</feature>
<feature type="peptide" id="PRO_0000009905" description="Neuropeptide FF">
    <location>
        <begin position="75"/>
        <end position="82"/>
    </location>
</feature>
<feature type="propeptide" id="PRO_0000009906">
    <location>
        <begin position="85"/>
        <end position="100"/>
    </location>
</feature>
<feature type="peptide" id="PRO_0000009907" description="Neuropeptide AF-like">
    <location>
        <begin position="101"/>
        <end position="111"/>
    </location>
</feature>
<feature type="modified residue" description="Phenylalanine amide" evidence="1">
    <location>
        <position position="82"/>
    </location>
</feature>
<feature type="modified residue" description="Phenylalanine amide" evidence="1">
    <location>
        <position position="111"/>
    </location>
</feature>
<reference key="1">
    <citation type="journal article" date="1999" name="Mol. Pharmacol.">
        <title>Gene for pain modulatory neuropeptide NPFF: induction in spinal cord by noxious stimuli.</title>
        <authorList>
            <person name="Vilim F.S."/>
            <person name="Aarnisalo A.A."/>
            <person name="Nieminen M.L."/>
            <person name="Lintunen M."/>
            <person name="Karlstedt K."/>
            <person name="Kontinen V.K."/>
            <person name="Kalso E."/>
            <person name="States B."/>
            <person name="Panula P."/>
            <person name="Ziff E."/>
        </authorList>
    </citation>
    <scope>NUCLEOTIDE SEQUENCE [MRNA]</scope>
    <source>
        <tissue>Brain</tissue>
    </source>
</reference>
<reference key="2">
    <citation type="journal article" date="2000" name="Neuron">
        <title>Neuropeptide FF and FMRFamide potentiate acid-evoked currents from sensory neurons and proton-gated DEG/ENaC channels.</title>
        <authorList>
            <person name="Askwith C.C."/>
            <person name="Cheng C."/>
            <person name="Ikuma M."/>
            <person name="Benson C."/>
            <person name="Price M.P."/>
            <person name="Welsh M.J."/>
        </authorList>
    </citation>
    <scope>FUNCTION</scope>
</reference>
<name>NPFF_MOUSE</name>
<organism>
    <name type="scientific">Mus musculus</name>
    <name type="common">Mouse</name>
    <dbReference type="NCBI Taxonomy" id="10090"/>
    <lineage>
        <taxon>Eukaryota</taxon>
        <taxon>Metazoa</taxon>
        <taxon>Chordata</taxon>
        <taxon>Craniata</taxon>
        <taxon>Vertebrata</taxon>
        <taxon>Euteleostomi</taxon>
        <taxon>Mammalia</taxon>
        <taxon>Eutheria</taxon>
        <taxon>Euarchontoglires</taxon>
        <taxon>Glires</taxon>
        <taxon>Rodentia</taxon>
        <taxon>Myomorpha</taxon>
        <taxon>Muroidea</taxon>
        <taxon>Muridae</taxon>
        <taxon>Murinae</taxon>
        <taxon>Mus</taxon>
        <taxon>Mus</taxon>
    </lineage>
</organism>
<comment type="function">
    <text evidence="3">Morphine modulating peptides. Have wide-ranging physiologic effects, including the modulation of morphine-induced analgesia, elevation of arterial blood pressure, and increased somatostatin secretion from the pancreas. Neuropeptide FF potentiates and sensitizes ASIC1 and ASIC3 channels.</text>
</comment>
<comment type="subcellular location">
    <subcellularLocation>
        <location>Secreted</location>
    </subcellularLocation>
</comment>
<comment type="similarity">
    <text evidence="4">Belongs to the FARP (FMRFamide related peptide) family.</text>
</comment>
<protein>
    <recommendedName>
        <fullName>Pro-FMRFamide-related neuropeptide FF</fullName>
    </recommendedName>
    <alternativeName>
        <fullName>FMRFamide-related peptides</fullName>
    </alternativeName>
    <component>
        <recommendedName>
            <fullName>Neuropeptide SF</fullName>
            <shortName>NPSF</shortName>
        </recommendedName>
    </component>
    <component>
        <recommendedName>
            <fullName>Neuropeptide FF</fullName>
            <shortName>NPFF</shortName>
        </recommendedName>
    </component>
    <component>
        <recommendedName>
            <fullName>Neuropeptide AF-like</fullName>
            <shortName>NPAF</shortName>
        </recommendedName>
    </component>
</protein>
<proteinExistence type="inferred from homology"/>
<accession>Q9WVA8</accession>
<sequence>MDSKWAALLLLLLLLLNWGHTEEAGSWGEDQVFAGEDKGPHPPQYAHIPDRIQTPGSLFRVLLQAMDTPRRSPAFLFQPQRFGRSAWGSWSKEQLNPQARQFWSLAAPQRFGKK</sequence>
<evidence type="ECO:0000250" key="1"/>
<evidence type="ECO:0000255" key="2"/>
<evidence type="ECO:0000269" key="3">
    <source>
    </source>
</evidence>
<evidence type="ECO:0000305" key="4"/>
<keyword id="KW-0027">Amidation</keyword>
<keyword id="KW-0165">Cleavage on pair of basic residues</keyword>
<keyword id="KW-0527">Neuropeptide</keyword>
<keyword id="KW-1185">Reference proteome</keyword>
<keyword id="KW-0964">Secreted</keyword>
<keyword id="KW-0732">Signal</keyword>
<gene>
    <name type="primary">Npff</name>
</gene>